<comment type="function">
    <text>Crystallins are the dominant structural components of the vertebrate eye lens.</text>
</comment>
<comment type="subunit">
    <text evidence="1">Monomer.</text>
</comment>
<comment type="domain">
    <text>Has a two-domain beta-structure, folded into four very similar Greek key motifs.</text>
</comment>
<comment type="similarity">
    <text evidence="4">Belongs to the beta/gamma-crystallin family.</text>
</comment>
<organism>
    <name type="scientific">Rattus norvegicus</name>
    <name type="common">Rat</name>
    <dbReference type="NCBI Taxonomy" id="10116"/>
    <lineage>
        <taxon>Eukaryota</taxon>
        <taxon>Metazoa</taxon>
        <taxon>Chordata</taxon>
        <taxon>Craniata</taxon>
        <taxon>Vertebrata</taxon>
        <taxon>Euteleostomi</taxon>
        <taxon>Mammalia</taxon>
        <taxon>Eutheria</taxon>
        <taxon>Euarchontoglires</taxon>
        <taxon>Glires</taxon>
        <taxon>Rodentia</taxon>
        <taxon>Myomorpha</taxon>
        <taxon>Muroidea</taxon>
        <taxon>Muridae</taxon>
        <taxon>Murinae</taxon>
        <taxon>Rattus</taxon>
    </lineage>
</organism>
<sequence length="178" mass="20942">MSKTGAKISFYEDRNFQGRRYDCDCDCVDFRSYLSRCNSIRVEGGTWAVYERPNFSGHMYILPQGEYPEYQRWMGLNDRLGSCRAVHLSSGGQYKIQIFEKGDFSGQMYETTEDCPSTMERFHLREIHSCKVLEGTWIFYELPSYHGRQYLLDKKEYRKPVDWGAASPAVQSFRRIVE</sequence>
<feature type="initiator methionine" description="Removed" evidence="2">
    <location>
        <position position="1"/>
    </location>
</feature>
<feature type="chain" id="PRO_0000304973" description="Gamma-crystallin S">
    <location>
        <begin position="2"/>
        <end position="178"/>
    </location>
</feature>
<feature type="domain" description="Beta/gamma crystallin 'Greek key' 1" evidence="3">
    <location>
        <begin position="6"/>
        <end position="44"/>
    </location>
</feature>
<feature type="domain" description="Beta/gamma crystallin 'Greek key' 2" evidence="3">
    <location>
        <begin position="45"/>
        <end position="87"/>
    </location>
</feature>
<feature type="domain" description="Beta/gamma crystallin 'Greek key' 3" evidence="3">
    <location>
        <begin position="94"/>
        <end position="134"/>
    </location>
</feature>
<feature type="domain" description="Beta/gamma crystallin 'Greek key' 4" evidence="3">
    <location>
        <begin position="135"/>
        <end position="177"/>
    </location>
</feature>
<feature type="region of interest" description="N-terminal arm">
    <location>
        <begin position="2"/>
        <end position="5"/>
    </location>
</feature>
<feature type="region of interest" description="Connecting peptide">
    <location>
        <begin position="88"/>
        <end position="93"/>
    </location>
</feature>
<feature type="modified residue" description="N-acetylserine" evidence="2">
    <location>
        <position position="2"/>
    </location>
</feature>
<proteinExistence type="inferred from homology"/>
<evidence type="ECO:0000250" key="1"/>
<evidence type="ECO:0000250" key="2">
    <source>
        <dbReference type="UniProtKB" id="P22914"/>
    </source>
</evidence>
<evidence type="ECO:0000255" key="3">
    <source>
        <dbReference type="PROSITE-ProRule" id="PRU00028"/>
    </source>
</evidence>
<evidence type="ECO:0000305" key="4"/>
<protein>
    <recommendedName>
        <fullName>Gamma-crystallin S</fullName>
    </recommendedName>
    <alternativeName>
        <fullName>Beta-crystallin S</fullName>
    </alternativeName>
    <alternativeName>
        <fullName>Gamma-S-crystallin</fullName>
    </alternativeName>
</protein>
<keyword id="KW-0007">Acetylation</keyword>
<keyword id="KW-0273">Eye lens protein</keyword>
<keyword id="KW-1185">Reference proteome</keyword>
<keyword id="KW-0677">Repeat</keyword>
<name>CRYGS_RAT</name>
<gene>
    <name type="primary">Crygs</name>
</gene>
<accession>P0C5E9</accession>
<reference key="1">
    <citation type="journal article" date="2004" name="Nature">
        <title>Genome sequence of the Brown Norway rat yields insights into mammalian evolution.</title>
        <authorList>
            <person name="Gibbs R.A."/>
            <person name="Weinstock G.M."/>
            <person name="Metzker M.L."/>
            <person name="Muzny D.M."/>
            <person name="Sodergren E.J."/>
            <person name="Scherer S."/>
            <person name="Scott G."/>
            <person name="Steffen D."/>
            <person name="Worley K.C."/>
            <person name="Burch P.E."/>
            <person name="Okwuonu G."/>
            <person name="Hines S."/>
            <person name="Lewis L."/>
            <person name="Deramo C."/>
            <person name="Delgado O."/>
            <person name="Dugan-Rocha S."/>
            <person name="Miner G."/>
            <person name="Morgan M."/>
            <person name="Hawes A."/>
            <person name="Gill R."/>
            <person name="Holt R.A."/>
            <person name="Adams M.D."/>
            <person name="Amanatides P.G."/>
            <person name="Baden-Tillson H."/>
            <person name="Barnstead M."/>
            <person name="Chin S."/>
            <person name="Evans C.A."/>
            <person name="Ferriera S."/>
            <person name="Fosler C."/>
            <person name="Glodek A."/>
            <person name="Gu Z."/>
            <person name="Jennings D."/>
            <person name="Kraft C.L."/>
            <person name="Nguyen T."/>
            <person name="Pfannkoch C.M."/>
            <person name="Sitter C."/>
            <person name="Sutton G.G."/>
            <person name="Venter J.C."/>
            <person name="Woodage T."/>
            <person name="Smith D."/>
            <person name="Lee H.-M."/>
            <person name="Gustafson E."/>
            <person name="Cahill P."/>
            <person name="Kana A."/>
            <person name="Doucette-Stamm L."/>
            <person name="Weinstock K."/>
            <person name="Fechtel K."/>
            <person name="Weiss R.B."/>
            <person name="Dunn D.M."/>
            <person name="Green E.D."/>
            <person name="Blakesley R.W."/>
            <person name="Bouffard G.G."/>
            <person name="De Jong P.J."/>
            <person name="Osoegawa K."/>
            <person name="Zhu B."/>
            <person name="Marra M."/>
            <person name="Schein J."/>
            <person name="Bosdet I."/>
            <person name="Fjell C."/>
            <person name="Jones S."/>
            <person name="Krzywinski M."/>
            <person name="Mathewson C."/>
            <person name="Siddiqui A."/>
            <person name="Wye N."/>
            <person name="McPherson J."/>
            <person name="Zhao S."/>
            <person name="Fraser C.M."/>
            <person name="Shetty J."/>
            <person name="Shatsman S."/>
            <person name="Geer K."/>
            <person name="Chen Y."/>
            <person name="Abramzon S."/>
            <person name="Nierman W.C."/>
            <person name="Havlak P.H."/>
            <person name="Chen R."/>
            <person name="Durbin K.J."/>
            <person name="Egan A."/>
            <person name="Ren Y."/>
            <person name="Song X.-Z."/>
            <person name="Li B."/>
            <person name="Liu Y."/>
            <person name="Qin X."/>
            <person name="Cawley S."/>
            <person name="Cooney A.J."/>
            <person name="D'Souza L.M."/>
            <person name="Martin K."/>
            <person name="Wu J.Q."/>
            <person name="Gonzalez-Garay M.L."/>
            <person name="Jackson A.R."/>
            <person name="Kalafus K.J."/>
            <person name="McLeod M.P."/>
            <person name="Milosavljevic A."/>
            <person name="Virk D."/>
            <person name="Volkov A."/>
            <person name="Wheeler D.A."/>
            <person name="Zhang Z."/>
            <person name="Bailey J.A."/>
            <person name="Eichler E.E."/>
            <person name="Tuzun E."/>
            <person name="Birney E."/>
            <person name="Mongin E."/>
            <person name="Ureta-Vidal A."/>
            <person name="Woodwark C."/>
            <person name="Zdobnov E."/>
            <person name="Bork P."/>
            <person name="Suyama M."/>
            <person name="Torrents D."/>
            <person name="Alexandersson M."/>
            <person name="Trask B.J."/>
            <person name="Young J.M."/>
            <person name="Huang H."/>
            <person name="Wang H."/>
            <person name="Xing H."/>
            <person name="Daniels S."/>
            <person name="Gietzen D."/>
            <person name="Schmidt J."/>
            <person name="Stevens K."/>
            <person name="Vitt U."/>
            <person name="Wingrove J."/>
            <person name="Camara F."/>
            <person name="Mar Alba M."/>
            <person name="Abril J.F."/>
            <person name="Guigo R."/>
            <person name="Smit A."/>
            <person name="Dubchak I."/>
            <person name="Rubin E.M."/>
            <person name="Couronne O."/>
            <person name="Poliakov A."/>
            <person name="Huebner N."/>
            <person name="Ganten D."/>
            <person name="Goesele C."/>
            <person name="Hummel O."/>
            <person name="Kreitler T."/>
            <person name="Lee Y.-A."/>
            <person name="Monti J."/>
            <person name="Schulz H."/>
            <person name="Zimdahl H."/>
            <person name="Himmelbauer H."/>
            <person name="Lehrach H."/>
            <person name="Jacob H.J."/>
            <person name="Bromberg S."/>
            <person name="Gullings-Handley J."/>
            <person name="Jensen-Seaman M.I."/>
            <person name="Kwitek A.E."/>
            <person name="Lazar J."/>
            <person name="Pasko D."/>
            <person name="Tonellato P.J."/>
            <person name="Twigger S."/>
            <person name="Ponting C.P."/>
            <person name="Duarte J.M."/>
            <person name="Rice S."/>
            <person name="Goodstadt L."/>
            <person name="Beatson S.A."/>
            <person name="Emes R.D."/>
            <person name="Winter E.E."/>
            <person name="Webber C."/>
            <person name="Brandt P."/>
            <person name="Nyakatura G."/>
            <person name="Adetobi M."/>
            <person name="Chiaromonte F."/>
            <person name="Elnitski L."/>
            <person name="Eswara P."/>
            <person name="Hardison R.C."/>
            <person name="Hou M."/>
            <person name="Kolbe D."/>
            <person name="Makova K."/>
            <person name="Miller W."/>
            <person name="Nekrutenko A."/>
            <person name="Riemer C."/>
            <person name="Schwartz S."/>
            <person name="Taylor J."/>
            <person name="Yang S."/>
            <person name="Zhang Y."/>
            <person name="Lindpaintner K."/>
            <person name="Andrews T.D."/>
            <person name="Caccamo M."/>
            <person name="Clamp M."/>
            <person name="Clarke L."/>
            <person name="Curwen V."/>
            <person name="Durbin R.M."/>
            <person name="Eyras E."/>
            <person name="Searle S.M."/>
            <person name="Cooper G.M."/>
            <person name="Batzoglou S."/>
            <person name="Brudno M."/>
            <person name="Sidow A."/>
            <person name="Stone E.A."/>
            <person name="Payseur B.A."/>
            <person name="Bourque G."/>
            <person name="Lopez-Otin C."/>
            <person name="Puente X.S."/>
            <person name="Chakrabarti K."/>
            <person name="Chatterji S."/>
            <person name="Dewey C."/>
            <person name="Pachter L."/>
            <person name="Bray N."/>
            <person name="Yap V.B."/>
            <person name="Caspi A."/>
            <person name="Tesler G."/>
            <person name="Pevzner P.A."/>
            <person name="Haussler D."/>
            <person name="Roskin K.M."/>
            <person name="Baertsch R."/>
            <person name="Clawson H."/>
            <person name="Furey T.S."/>
            <person name="Hinrichs A.S."/>
            <person name="Karolchik D."/>
            <person name="Kent W.J."/>
            <person name="Rosenbloom K.R."/>
            <person name="Trumbower H."/>
            <person name="Weirauch M."/>
            <person name="Cooper D.N."/>
            <person name="Stenson P.D."/>
            <person name="Ma B."/>
            <person name="Brent M."/>
            <person name="Arumugam M."/>
            <person name="Shteynberg D."/>
            <person name="Copley R.R."/>
            <person name="Taylor M.S."/>
            <person name="Riethman H."/>
            <person name="Mudunuri U."/>
            <person name="Peterson J."/>
            <person name="Guyer M."/>
            <person name="Felsenfeld A."/>
            <person name="Old S."/>
            <person name="Mockrin S."/>
            <person name="Collins F.S."/>
        </authorList>
    </citation>
    <scope>NUCLEOTIDE SEQUENCE [LARGE SCALE GENOMIC DNA]</scope>
    <source>
        <strain>Brown Norway</strain>
    </source>
</reference>
<dbReference type="RefSeq" id="NP_001103023.1">
    <property type="nucleotide sequence ID" value="NM_001109553.1"/>
</dbReference>
<dbReference type="SMR" id="P0C5E9"/>
<dbReference type="FunCoup" id="P0C5E9">
    <property type="interactions" value="8"/>
</dbReference>
<dbReference type="STRING" id="10116.ENSRNOP00000055204"/>
<dbReference type="PhosphoSitePlus" id="P0C5E9"/>
<dbReference type="PaxDb" id="10116-ENSRNOP00000055204"/>
<dbReference type="Ensembl" id="ENSRNOT00000058402.3">
    <property type="protein sequence ID" value="ENSRNOP00000055204.2"/>
    <property type="gene ID" value="ENSRNOG00000038355.3"/>
</dbReference>
<dbReference type="GeneID" id="689897"/>
<dbReference type="KEGG" id="rno:689897"/>
<dbReference type="UCSC" id="RGD:1587483">
    <property type="organism name" value="rat"/>
</dbReference>
<dbReference type="AGR" id="RGD:1587483"/>
<dbReference type="CTD" id="1427"/>
<dbReference type="RGD" id="1587483">
    <property type="gene designation" value="Crygs"/>
</dbReference>
<dbReference type="eggNOG" id="ENOG502QQAM">
    <property type="taxonomic scope" value="Eukaryota"/>
</dbReference>
<dbReference type="GeneTree" id="ENSGT00940000160342"/>
<dbReference type="HOGENOM" id="CLU_081883_1_1_1"/>
<dbReference type="InParanoid" id="P0C5E9"/>
<dbReference type="OMA" id="SVMEEWH"/>
<dbReference type="OrthoDB" id="8407241at2759"/>
<dbReference type="PhylomeDB" id="P0C5E9"/>
<dbReference type="PRO" id="PR:P0C5E9"/>
<dbReference type="Proteomes" id="UP000002494">
    <property type="component" value="Chromosome 11"/>
</dbReference>
<dbReference type="Bgee" id="ENSRNOG00000038355">
    <property type="expression patterns" value="Expressed in kidney and 9 other cell types or tissues"/>
</dbReference>
<dbReference type="GO" id="GO:0005212">
    <property type="term" value="F:structural constituent of eye lens"/>
    <property type="evidence" value="ECO:0000266"/>
    <property type="project" value="RGD"/>
</dbReference>
<dbReference type="GO" id="GO:0002088">
    <property type="term" value="P:lens development in camera-type eye"/>
    <property type="evidence" value="ECO:0000266"/>
    <property type="project" value="RGD"/>
</dbReference>
<dbReference type="GO" id="GO:0002009">
    <property type="term" value="P:morphogenesis of an epithelium"/>
    <property type="evidence" value="ECO:0000266"/>
    <property type="project" value="RGD"/>
</dbReference>
<dbReference type="GO" id="GO:0007601">
    <property type="term" value="P:visual perception"/>
    <property type="evidence" value="ECO:0000318"/>
    <property type="project" value="GO_Central"/>
</dbReference>
<dbReference type="FunFam" id="2.60.20.10:FF:000001">
    <property type="entry name" value="Crystallin gamma S"/>
    <property type="match status" value="1"/>
</dbReference>
<dbReference type="FunFam" id="2.60.20.10:FF:000003">
    <property type="entry name" value="Crystallin gamma S"/>
    <property type="match status" value="1"/>
</dbReference>
<dbReference type="Gene3D" id="2.60.20.10">
    <property type="entry name" value="Crystallins"/>
    <property type="match status" value="2"/>
</dbReference>
<dbReference type="InterPro" id="IPR050252">
    <property type="entry name" value="Beta/Gamma-Crystallin"/>
</dbReference>
<dbReference type="InterPro" id="IPR001064">
    <property type="entry name" value="Beta/gamma_crystallin"/>
</dbReference>
<dbReference type="InterPro" id="IPR011024">
    <property type="entry name" value="G_crystallin-like"/>
</dbReference>
<dbReference type="PANTHER" id="PTHR11818">
    <property type="entry name" value="BETA/GAMMA CRYSTALLIN"/>
    <property type="match status" value="1"/>
</dbReference>
<dbReference type="PANTHER" id="PTHR11818:SF6">
    <property type="entry name" value="GAMMA-CRYSTALLIN S"/>
    <property type="match status" value="1"/>
</dbReference>
<dbReference type="Pfam" id="PF00030">
    <property type="entry name" value="Crystall"/>
    <property type="match status" value="2"/>
</dbReference>
<dbReference type="PRINTS" id="PR01367">
    <property type="entry name" value="BGCRYSTALLIN"/>
</dbReference>
<dbReference type="SMART" id="SM00247">
    <property type="entry name" value="XTALbg"/>
    <property type="match status" value="2"/>
</dbReference>
<dbReference type="SUPFAM" id="SSF49695">
    <property type="entry name" value="gamma-Crystallin-like"/>
    <property type="match status" value="1"/>
</dbReference>
<dbReference type="PROSITE" id="PS50915">
    <property type="entry name" value="CRYSTALLIN_BETA_GAMMA"/>
    <property type="match status" value="4"/>
</dbReference>